<keyword id="KW-1185">Reference proteome</keyword>
<keyword id="KW-0732">Signal</keyword>
<protein>
    <recommendedName>
        <fullName>Altered inheritance of mitochondria protein 6</fullName>
    </recommendedName>
</protein>
<reference key="1">
    <citation type="journal article" date="2009" name="Genome Res.">
        <title>Comparative genomics of protoploid Saccharomycetaceae.</title>
        <authorList>
            <consortium name="The Genolevures Consortium"/>
            <person name="Souciet J.-L."/>
            <person name="Dujon B."/>
            <person name="Gaillardin C."/>
            <person name="Johnston M."/>
            <person name="Baret P.V."/>
            <person name="Cliften P."/>
            <person name="Sherman D.J."/>
            <person name="Weissenbach J."/>
            <person name="Westhof E."/>
            <person name="Wincker P."/>
            <person name="Jubin C."/>
            <person name="Poulain J."/>
            <person name="Barbe V."/>
            <person name="Segurens B."/>
            <person name="Artiguenave F."/>
            <person name="Anthouard V."/>
            <person name="Vacherie B."/>
            <person name="Val M.-E."/>
            <person name="Fulton R.S."/>
            <person name="Minx P."/>
            <person name="Wilson R."/>
            <person name="Durrens P."/>
            <person name="Jean G."/>
            <person name="Marck C."/>
            <person name="Martin T."/>
            <person name="Nikolski M."/>
            <person name="Rolland T."/>
            <person name="Seret M.-L."/>
            <person name="Casaregola S."/>
            <person name="Despons L."/>
            <person name="Fairhead C."/>
            <person name="Fischer G."/>
            <person name="Lafontaine I."/>
            <person name="Leh V."/>
            <person name="Lemaire M."/>
            <person name="de Montigny J."/>
            <person name="Neuveglise C."/>
            <person name="Thierry A."/>
            <person name="Blanc-Lenfle I."/>
            <person name="Bleykasten C."/>
            <person name="Diffels J."/>
            <person name="Fritsch E."/>
            <person name="Frangeul L."/>
            <person name="Goeffon A."/>
            <person name="Jauniaux N."/>
            <person name="Kachouri-Lafond R."/>
            <person name="Payen C."/>
            <person name="Potier S."/>
            <person name="Pribylova L."/>
            <person name="Ozanne C."/>
            <person name="Richard G.-F."/>
            <person name="Sacerdot C."/>
            <person name="Straub M.-L."/>
            <person name="Talla E."/>
        </authorList>
    </citation>
    <scope>NUCLEOTIDE SEQUENCE [LARGE SCALE GENOMIC DNA]</scope>
    <source>
        <strain>ATCC 56472 / CBS 6340 / NRRL Y-8284</strain>
    </source>
</reference>
<name>AIM6_LACTC</name>
<dbReference type="EMBL" id="CU928166">
    <property type="protein sequence ID" value="CAR21706.1"/>
    <property type="molecule type" value="Genomic_DNA"/>
</dbReference>
<dbReference type="RefSeq" id="XP_002552144.1">
    <property type="nucleotide sequence ID" value="XM_002552098.1"/>
</dbReference>
<dbReference type="FunCoup" id="C5DD45">
    <property type="interactions" value="19"/>
</dbReference>
<dbReference type="GeneID" id="8291089"/>
<dbReference type="KEGG" id="lth:KLTH0B08206g"/>
<dbReference type="eggNOG" id="ENOG502QVA8">
    <property type="taxonomic scope" value="Eukaryota"/>
</dbReference>
<dbReference type="HOGENOM" id="CLU_031561_1_1_1"/>
<dbReference type="InParanoid" id="C5DD45"/>
<dbReference type="OMA" id="VRYWGLP"/>
<dbReference type="OrthoDB" id="4153866at2759"/>
<dbReference type="Proteomes" id="UP000002036">
    <property type="component" value="Chromosome B"/>
</dbReference>
<dbReference type="GO" id="GO:0008081">
    <property type="term" value="F:phosphoric diester hydrolase activity"/>
    <property type="evidence" value="ECO:0007669"/>
    <property type="project" value="InterPro"/>
</dbReference>
<dbReference type="GO" id="GO:0006629">
    <property type="term" value="P:lipid metabolic process"/>
    <property type="evidence" value="ECO:0007669"/>
    <property type="project" value="InterPro"/>
</dbReference>
<dbReference type="InterPro" id="IPR051236">
    <property type="entry name" value="HAT_RTT109-like"/>
</dbReference>
<dbReference type="InterPro" id="IPR017946">
    <property type="entry name" value="PLC-like_Pdiesterase_TIM-brl"/>
</dbReference>
<dbReference type="PANTHER" id="PTHR31571">
    <property type="entry name" value="ALTERED INHERITANCE OF MITOCHONDRIA PROTEIN 6"/>
    <property type="match status" value="1"/>
</dbReference>
<dbReference type="PANTHER" id="PTHR31571:SF1">
    <property type="entry name" value="ALTERED INHERITANCE OF MITOCHONDRIA PROTEIN 6"/>
    <property type="match status" value="1"/>
</dbReference>
<dbReference type="SUPFAM" id="SSF51695">
    <property type="entry name" value="PLC-like phosphodiesterases"/>
    <property type="match status" value="1"/>
</dbReference>
<feature type="signal peptide" evidence="1">
    <location>
        <begin position="1"/>
        <end status="unknown"/>
    </location>
</feature>
<feature type="chain" id="PRO_0000408708" description="Altered inheritance of mitochondria protein 6">
    <location>
        <begin status="unknown"/>
        <end position="429"/>
    </location>
</feature>
<sequence length="429" mass="48029">MKYLSYTITFVKNTHRSCQRINKSASFGMIGSLAIGFVLMIVSFWAGTYVNVRGNPVMLDFSDGASSTRGDSNAHNNLGLTGANLLHFFKNRMSDTKDLTDARGVQVSRFYDEVVRYLTAENAGASTAEGTCFPEGSIVSKLTRNVNVVPKVHSHNDYWRDLPLFEALCHGIPSVEADVWLVDNDTQLAVGHNEAFLDHAHRTLHSLYTGPLLTMLNEVNCNLGDKDHKYGVFYSSPETTLNLYIDFKSPDSTQTYALLMDLYLKPLIDMGYLTYFDMDEEKVVWNPVTVILTGDYPTDPTVLDGQEQKGYYNTTQRFVFLDAPMHKLDEHYSGISVVASASLQQLLGNCKDLSQEADRSLLRQGSLPTESVTCVAKQVQKAQSLGLKTRIWGAPTWPESSKQKLWSQQIFDIGIDFLNTDDLEEVTHL</sequence>
<evidence type="ECO:0000255" key="1"/>
<evidence type="ECO:0000305" key="2"/>
<accession>C5DD45</accession>
<organism>
    <name type="scientific">Lachancea thermotolerans (strain ATCC 56472 / CBS 6340 / NRRL Y-8284)</name>
    <name type="common">Yeast</name>
    <name type="synonym">Kluyveromyces thermotolerans</name>
    <dbReference type="NCBI Taxonomy" id="559295"/>
    <lineage>
        <taxon>Eukaryota</taxon>
        <taxon>Fungi</taxon>
        <taxon>Dikarya</taxon>
        <taxon>Ascomycota</taxon>
        <taxon>Saccharomycotina</taxon>
        <taxon>Saccharomycetes</taxon>
        <taxon>Saccharomycetales</taxon>
        <taxon>Saccharomycetaceae</taxon>
        <taxon>Lachancea</taxon>
    </lineage>
</organism>
<comment type="similarity">
    <text evidence="2">Belongs to the AIM6 family.</text>
</comment>
<proteinExistence type="inferred from homology"/>
<gene>
    <name type="primary">AIM6</name>
    <name type="ordered locus">KLTH0B08206g</name>
</gene>